<sequence>MNEHISSLLNEDCVRHIMCFLTDKEKGKFCLTCRDLLYLIKDVKFNDPVNKDNIEHLSYKKNFNCTYKISTVQDTNNRPISCFKIDFPNNKPTIIQKVVLPTNQTGNTFTFRLDENAFEKLLEHEDKVHKAITLIEQSITENESKKYPRLSLIQKY</sequence>
<protein>
    <recommendedName>
        <fullName>Putative F-box protein R637</fullName>
    </recommendedName>
</protein>
<reference key="1">
    <citation type="journal article" date="2004" name="Science">
        <title>The 1.2-megabase genome sequence of Mimivirus.</title>
        <authorList>
            <person name="Raoult D."/>
            <person name="Audic S."/>
            <person name="Robert C."/>
            <person name="Abergel C."/>
            <person name="Renesto P."/>
            <person name="Ogata H."/>
            <person name="La Scola B."/>
            <person name="Susan M."/>
            <person name="Claverie J.-M."/>
        </authorList>
    </citation>
    <scope>NUCLEOTIDE SEQUENCE [LARGE SCALE GENOMIC DNA]</scope>
    <source>
        <strain>Rowbotham-Bradford</strain>
    </source>
</reference>
<gene>
    <name type="ordered locus">MIMI_R637</name>
</gene>
<organism>
    <name type="scientific">Acanthamoeba polyphaga mimivirus</name>
    <name type="common">APMV</name>
    <dbReference type="NCBI Taxonomy" id="212035"/>
    <lineage>
        <taxon>Viruses</taxon>
        <taxon>Varidnaviria</taxon>
        <taxon>Bamfordvirae</taxon>
        <taxon>Nucleocytoviricota</taxon>
        <taxon>Megaviricetes</taxon>
        <taxon>Imitervirales</taxon>
        <taxon>Mimiviridae</taxon>
        <taxon>Megamimivirinae</taxon>
        <taxon>Mimivirus</taxon>
        <taxon>Mimivirus bradfordmassiliense</taxon>
    </lineage>
</organism>
<accession>Q5UR84</accession>
<feature type="chain" id="PRO_0000251099" description="Putative F-box protein R637">
    <location>
        <begin position="1"/>
        <end position="156"/>
    </location>
</feature>
<feature type="domain" description="F-box">
    <location>
        <begin position="4"/>
        <end position="51"/>
    </location>
</feature>
<name>YR637_MIMIV</name>
<organismHost>
    <name type="scientific">Acanthamoeba polyphaga</name>
    <name type="common">Amoeba</name>
    <dbReference type="NCBI Taxonomy" id="5757"/>
</organismHost>
<proteinExistence type="predicted"/>
<keyword id="KW-1185">Reference proteome</keyword>
<dbReference type="EMBL" id="AY653733">
    <property type="protein sequence ID" value="AAV50898.1"/>
    <property type="molecule type" value="Genomic_DNA"/>
</dbReference>
<dbReference type="KEGG" id="vg:9925281"/>
<dbReference type="Proteomes" id="UP000001134">
    <property type="component" value="Genome"/>
</dbReference>
<dbReference type="InterPro" id="IPR001810">
    <property type="entry name" value="F-box_dom"/>
</dbReference>
<dbReference type="Pfam" id="PF00646">
    <property type="entry name" value="F-box"/>
    <property type="match status" value="1"/>
</dbReference>